<feature type="chain" id="PRO_1000067013" description="Glucosamine-6-phosphate deaminase">
    <location>
        <begin position="1"/>
        <end position="259"/>
    </location>
</feature>
<feature type="active site" description="Proton acceptor; for enolization step" evidence="1">
    <location>
        <position position="66"/>
    </location>
</feature>
<feature type="active site" description="For ring-opening step" evidence="1">
    <location>
        <position position="135"/>
    </location>
</feature>
<feature type="active site" description="Proton acceptor; for ring-opening step" evidence="1">
    <location>
        <position position="137"/>
    </location>
</feature>
<feature type="active site" description="For ring-opening step" evidence="1">
    <location>
        <position position="142"/>
    </location>
</feature>
<accession>Q0SGH6</accession>
<protein>
    <recommendedName>
        <fullName evidence="1">Glucosamine-6-phosphate deaminase</fullName>
        <ecNumber evidence="1">3.5.99.6</ecNumber>
    </recommendedName>
    <alternativeName>
        <fullName evidence="1">GlcN6P deaminase</fullName>
        <shortName evidence="1">GNPDA</shortName>
    </alternativeName>
    <alternativeName>
        <fullName evidence="1">Glucosamine-6-phosphate isomerase</fullName>
    </alternativeName>
</protein>
<comment type="function">
    <text evidence="1">Catalyzes the reversible isomerization-deamination of glucosamine 6-phosphate (GlcN6P) to form fructose 6-phosphate (Fru6P) and ammonium ion.</text>
</comment>
<comment type="catalytic activity">
    <reaction evidence="1">
        <text>alpha-D-glucosamine 6-phosphate + H2O = beta-D-fructose 6-phosphate + NH4(+)</text>
        <dbReference type="Rhea" id="RHEA:12172"/>
        <dbReference type="ChEBI" id="CHEBI:15377"/>
        <dbReference type="ChEBI" id="CHEBI:28938"/>
        <dbReference type="ChEBI" id="CHEBI:57634"/>
        <dbReference type="ChEBI" id="CHEBI:75989"/>
        <dbReference type="EC" id="3.5.99.6"/>
    </reaction>
</comment>
<comment type="pathway">
    <text evidence="1">Amino-sugar metabolism; N-acetylneuraminate degradation; D-fructose 6-phosphate from N-acetylneuraminate: step 5/5.</text>
</comment>
<comment type="similarity">
    <text evidence="1">Belongs to the glucosamine/galactosamine-6-phosphate isomerase family. NagB subfamily.</text>
</comment>
<evidence type="ECO:0000255" key="1">
    <source>
        <dbReference type="HAMAP-Rule" id="MF_01241"/>
    </source>
</evidence>
<reference key="1">
    <citation type="journal article" date="2006" name="Proc. Natl. Acad. Sci. U.S.A.">
        <title>The complete genome of Rhodococcus sp. RHA1 provides insights into a catabolic powerhouse.</title>
        <authorList>
            <person name="McLeod M.P."/>
            <person name="Warren R.L."/>
            <person name="Hsiao W.W.L."/>
            <person name="Araki N."/>
            <person name="Myhre M."/>
            <person name="Fernandes C."/>
            <person name="Miyazawa D."/>
            <person name="Wong W."/>
            <person name="Lillquist A.L."/>
            <person name="Wang D."/>
            <person name="Dosanjh M."/>
            <person name="Hara H."/>
            <person name="Petrescu A."/>
            <person name="Morin R.D."/>
            <person name="Yang G."/>
            <person name="Stott J.M."/>
            <person name="Schein J.E."/>
            <person name="Shin H."/>
            <person name="Smailus D."/>
            <person name="Siddiqui A.S."/>
            <person name="Marra M.A."/>
            <person name="Jones S.J.M."/>
            <person name="Holt R."/>
            <person name="Brinkman F.S.L."/>
            <person name="Miyauchi K."/>
            <person name="Fukuda M."/>
            <person name="Davies J.E."/>
            <person name="Mohn W.W."/>
            <person name="Eltis L.D."/>
        </authorList>
    </citation>
    <scope>NUCLEOTIDE SEQUENCE [LARGE SCALE GENOMIC DNA]</scope>
    <source>
        <strain>RHA1</strain>
    </source>
</reference>
<gene>
    <name evidence="1" type="primary">nagB</name>
    <name type="ordered locus">RHA1_ro01547</name>
</gene>
<dbReference type="EC" id="3.5.99.6" evidence="1"/>
<dbReference type="EMBL" id="CP000431">
    <property type="protein sequence ID" value="ABG93360.1"/>
    <property type="molecule type" value="Genomic_DNA"/>
</dbReference>
<dbReference type="RefSeq" id="WP_011594517.1">
    <property type="nucleotide sequence ID" value="NC_008268.1"/>
</dbReference>
<dbReference type="SMR" id="Q0SGH6"/>
<dbReference type="KEGG" id="rha:RHA1_ro01547"/>
<dbReference type="PATRIC" id="fig|101510.16.peg.1564"/>
<dbReference type="eggNOG" id="COG0363">
    <property type="taxonomic scope" value="Bacteria"/>
</dbReference>
<dbReference type="HOGENOM" id="CLU_049611_1_1_11"/>
<dbReference type="OrthoDB" id="9791139at2"/>
<dbReference type="UniPathway" id="UPA00629">
    <property type="reaction ID" value="UER00684"/>
</dbReference>
<dbReference type="Proteomes" id="UP000008710">
    <property type="component" value="Chromosome"/>
</dbReference>
<dbReference type="GO" id="GO:0005737">
    <property type="term" value="C:cytoplasm"/>
    <property type="evidence" value="ECO:0007669"/>
    <property type="project" value="TreeGrafter"/>
</dbReference>
<dbReference type="GO" id="GO:0004342">
    <property type="term" value="F:glucosamine-6-phosphate deaminase activity"/>
    <property type="evidence" value="ECO:0007669"/>
    <property type="project" value="UniProtKB-UniRule"/>
</dbReference>
<dbReference type="GO" id="GO:0042802">
    <property type="term" value="F:identical protein binding"/>
    <property type="evidence" value="ECO:0007669"/>
    <property type="project" value="TreeGrafter"/>
</dbReference>
<dbReference type="GO" id="GO:0005975">
    <property type="term" value="P:carbohydrate metabolic process"/>
    <property type="evidence" value="ECO:0007669"/>
    <property type="project" value="InterPro"/>
</dbReference>
<dbReference type="GO" id="GO:0006043">
    <property type="term" value="P:glucosamine catabolic process"/>
    <property type="evidence" value="ECO:0007669"/>
    <property type="project" value="TreeGrafter"/>
</dbReference>
<dbReference type="GO" id="GO:0006046">
    <property type="term" value="P:N-acetylglucosamine catabolic process"/>
    <property type="evidence" value="ECO:0007669"/>
    <property type="project" value="TreeGrafter"/>
</dbReference>
<dbReference type="GO" id="GO:0019262">
    <property type="term" value="P:N-acetylneuraminate catabolic process"/>
    <property type="evidence" value="ECO:0007669"/>
    <property type="project" value="UniProtKB-UniRule"/>
</dbReference>
<dbReference type="CDD" id="cd01399">
    <property type="entry name" value="GlcN6P_deaminase"/>
    <property type="match status" value="1"/>
</dbReference>
<dbReference type="FunFam" id="3.40.50.1360:FF:000003">
    <property type="entry name" value="Glucosamine-6-phosphate deaminase"/>
    <property type="match status" value="1"/>
</dbReference>
<dbReference type="Gene3D" id="3.40.50.1360">
    <property type="match status" value="1"/>
</dbReference>
<dbReference type="HAMAP" id="MF_01241">
    <property type="entry name" value="GlcN6P_deamin"/>
    <property type="match status" value="1"/>
</dbReference>
<dbReference type="InterPro" id="IPR006148">
    <property type="entry name" value="Glc/Gal-6P_isomerase"/>
</dbReference>
<dbReference type="InterPro" id="IPR004547">
    <property type="entry name" value="Glucosamine6P_isomerase"/>
</dbReference>
<dbReference type="InterPro" id="IPR018321">
    <property type="entry name" value="Glucosamine6P_isomerase_CS"/>
</dbReference>
<dbReference type="InterPro" id="IPR037171">
    <property type="entry name" value="NagB/RpiA_transferase-like"/>
</dbReference>
<dbReference type="NCBIfam" id="TIGR00502">
    <property type="entry name" value="nagB"/>
    <property type="match status" value="1"/>
</dbReference>
<dbReference type="NCBIfam" id="NF001684">
    <property type="entry name" value="PRK00443.1-4"/>
    <property type="match status" value="1"/>
</dbReference>
<dbReference type="PANTHER" id="PTHR11280">
    <property type="entry name" value="GLUCOSAMINE-6-PHOSPHATE ISOMERASE"/>
    <property type="match status" value="1"/>
</dbReference>
<dbReference type="PANTHER" id="PTHR11280:SF5">
    <property type="entry name" value="GLUCOSAMINE-6-PHOSPHATE ISOMERASE"/>
    <property type="match status" value="1"/>
</dbReference>
<dbReference type="Pfam" id="PF01182">
    <property type="entry name" value="Glucosamine_iso"/>
    <property type="match status" value="1"/>
</dbReference>
<dbReference type="SUPFAM" id="SSF100950">
    <property type="entry name" value="NagB/RpiA/CoA transferase-like"/>
    <property type="match status" value="1"/>
</dbReference>
<dbReference type="PROSITE" id="PS01161">
    <property type="entry name" value="GLC_GALNAC_ISOMERASE"/>
    <property type="match status" value="1"/>
</dbReference>
<sequence>MEIVIRQTPSEVSSTVADIVEGYVRRGPATLGLATGSSPLGSYRELARRHRESGLDFSDARAFLLDEYVGLPKSHDQSYFSVIRSEFVDHVNLDTDRVLSPNGESPDIAEEGARYDAAIAEAGGVDVQLLGIGTDGHIGFNEPGSALTSRTRVKTLTEQTRLDNARFFDSVDDVPHHVLTQGLGTIGEARHLVMIAFGKGKAEAIAAAAEGPLSAFCPASVMQLHRHVTVVIDEAAASKLQLADYYRYALEHKPSWQSF</sequence>
<keyword id="KW-0119">Carbohydrate metabolism</keyword>
<keyword id="KW-0378">Hydrolase</keyword>
<name>NAGB_RHOJR</name>
<proteinExistence type="inferred from homology"/>
<organism>
    <name type="scientific">Rhodococcus jostii (strain RHA1)</name>
    <dbReference type="NCBI Taxonomy" id="101510"/>
    <lineage>
        <taxon>Bacteria</taxon>
        <taxon>Bacillati</taxon>
        <taxon>Actinomycetota</taxon>
        <taxon>Actinomycetes</taxon>
        <taxon>Mycobacteriales</taxon>
        <taxon>Nocardiaceae</taxon>
        <taxon>Rhodococcus</taxon>
    </lineage>
</organism>